<sequence>MSPAAGVPEMPALDASGVRLGIVASTWHSRICDALLAGARKVAADSGVENPTVVRVLGAIEIPVVAQELARNHDAVVALGVVIRGQTPHFEYVCDAVTQGITRVSLDASTPVANGVLTTDNEQQALDRAGLPDSAEDKGAQAAGAALSAALTLRELRARS</sequence>
<name>RISB_MYCA1</name>
<comment type="function">
    <text evidence="1">Catalyzes the formation of 6,7-dimethyl-8-ribityllumazine by condensation of 5-amino-6-(D-ribitylamino)uracil with 3,4-dihydroxy-2-butanone 4-phosphate. This is the penultimate step in the biosynthesis of riboflavin.</text>
</comment>
<comment type="catalytic activity">
    <reaction evidence="1">
        <text>(2S)-2-hydroxy-3-oxobutyl phosphate + 5-amino-6-(D-ribitylamino)uracil = 6,7-dimethyl-8-(1-D-ribityl)lumazine + phosphate + 2 H2O + H(+)</text>
        <dbReference type="Rhea" id="RHEA:26152"/>
        <dbReference type="ChEBI" id="CHEBI:15377"/>
        <dbReference type="ChEBI" id="CHEBI:15378"/>
        <dbReference type="ChEBI" id="CHEBI:15934"/>
        <dbReference type="ChEBI" id="CHEBI:43474"/>
        <dbReference type="ChEBI" id="CHEBI:58201"/>
        <dbReference type="ChEBI" id="CHEBI:58830"/>
        <dbReference type="EC" id="2.5.1.78"/>
    </reaction>
</comment>
<comment type="pathway">
    <text evidence="1">Cofactor biosynthesis; riboflavin biosynthesis; riboflavin from 2-hydroxy-3-oxobutyl phosphate and 5-amino-6-(D-ribitylamino)uracil: step 1/2.</text>
</comment>
<comment type="subunit">
    <text evidence="1">Homopentamer.</text>
</comment>
<comment type="similarity">
    <text evidence="1">Belongs to the DMRL synthase family.</text>
</comment>
<accession>A0QI08</accession>
<keyword id="KW-0686">Riboflavin biosynthesis</keyword>
<keyword id="KW-0808">Transferase</keyword>
<proteinExistence type="inferred from homology"/>
<reference key="1">
    <citation type="submission" date="2006-10" db="EMBL/GenBank/DDBJ databases">
        <authorList>
            <person name="Fleischmann R.D."/>
            <person name="Dodson R.J."/>
            <person name="Haft D.H."/>
            <person name="Merkel J.S."/>
            <person name="Nelson W.C."/>
            <person name="Fraser C.M."/>
        </authorList>
    </citation>
    <scope>NUCLEOTIDE SEQUENCE [LARGE SCALE GENOMIC DNA]</scope>
    <source>
        <strain>104</strain>
    </source>
</reference>
<protein>
    <recommendedName>
        <fullName evidence="1">6,7-dimethyl-8-ribityllumazine synthase</fullName>
        <shortName evidence="1">DMRL synthase</shortName>
        <shortName evidence="1">LS</shortName>
        <shortName evidence="1">Lumazine synthase</shortName>
        <ecNumber evidence="1">2.5.1.78</ecNumber>
    </recommendedName>
</protein>
<feature type="chain" id="PRO_1000040454" description="6,7-dimethyl-8-ribityllumazine synthase">
    <location>
        <begin position="1"/>
        <end position="160"/>
    </location>
</feature>
<feature type="active site" description="Proton donor" evidence="1">
    <location>
        <position position="89"/>
    </location>
</feature>
<feature type="binding site" evidence="1">
    <location>
        <position position="27"/>
    </location>
    <ligand>
        <name>5-amino-6-(D-ribitylamino)uracil</name>
        <dbReference type="ChEBI" id="CHEBI:15934"/>
    </ligand>
</feature>
<feature type="binding site" evidence="1">
    <location>
        <begin position="59"/>
        <end position="61"/>
    </location>
    <ligand>
        <name>5-amino-6-(D-ribitylamino)uracil</name>
        <dbReference type="ChEBI" id="CHEBI:15934"/>
    </ligand>
</feature>
<feature type="binding site" evidence="1">
    <location>
        <begin position="81"/>
        <end position="83"/>
    </location>
    <ligand>
        <name>5-amino-6-(D-ribitylamino)uracil</name>
        <dbReference type="ChEBI" id="CHEBI:15934"/>
    </ligand>
</feature>
<feature type="binding site" evidence="1">
    <location>
        <begin position="86"/>
        <end position="87"/>
    </location>
    <ligand>
        <name>(2S)-2-hydroxy-3-oxobutyl phosphate</name>
        <dbReference type="ChEBI" id="CHEBI:58830"/>
    </ligand>
</feature>
<feature type="binding site" evidence="1">
    <location>
        <position position="114"/>
    </location>
    <ligand>
        <name>5-amino-6-(D-ribitylamino)uracil</name>
        <dbReference type="ChEBI" id="CHEBI:15934"/>
    </ligand>
</feature>
<feature type="binding site" evidence="1">
    <location>
        <position position="128"/>
    </location>
    <ligand>
        <name>(2S)-2-hydroxy-3-oxobutyl phosphate</name>
        <dbReference type="ChEBI" id="CHEBI:58830"/>
    </ligand>
</feature>
<dbReference type="EC" id="2.5.1.78" evidence="1"/>
<dbReference type="EMBL" id="CP000479">
    <property type="protein sequence ID" value="ABK67910.1"/>
    <property type="molecule type" value="Genomic_DNA"/>
</dbReference>
<dbReference type="RefSeq" id="WP_009977644.1">
    <property type="nucleotide sequence ID" value="NC_008595.1"/>
</dbReference>
<dbReference type="SMR" id="A0QI08"/>
<dbReference type="GeneID" id="75270764"/>
<dbReference type="KEGG" id="mav:MAV_3364"/>
<dbReference type="HOGENOM" id="CLU_089358_1_2_11"/>
<dbReference type="UniPathway" id="UPA00275">
    <property type="reaction ID" value="UER00404"/>
</dbReference>
<dbReference type="Proteomes" id="UP000001574">
    <property type="component" value="Chromosome"/>
</dbReference>
<dbReference type="GO" id="GO:0005829">
    <property type="term" value="C:cytosol"/>
    <property type="evidence" value="ECO:0007669"/>
    <property type="project" value="TreeGrafter"/>
</dbReference>
<dbReference type="GO" id="GO:0009349">
    <property type="term" value="C:riboflavin synthase complex"/>
    <property type="evidence" value="ECO:0007669"/>
    <property type="project" value="InterPro"/>
</dbReference>
<dbReference type="GO" id="GO:0000906">
    <property type="term" value="F:6,7-dimethyl-8-ribityllumazine synthase activity"/>
    <property type="evidence" value="ECO:0007669"/>
    <property type="project" value="UniProtKB-UniRule"/>
</dbReference>
<dbReference type="GO" id="GO:0009231">
    <property type="term" value="P:riboflavin biosynthetic process"/>
    <property type="evidence" value="ECO:0007669"/>
    <property type="project" value="UniProtKB-UniRule"/>
</dbReference>
<dbReference type="CDD" id="cd09209">
    <property type="entry name" value="Lumazine_synthase-I"/>
    <property type="match status" value="1"/>
</dbReference>
<dbReference type="Gene3D" id="3.40.50.960">
    <property type="entry name" value="Lumazine/riboflavin synthase"/>
    <property type="match status" value="1"/>
</dbReference>
<dbReference type="HAMAP" id="MF_00178">
    <property type="entry name" value="Lumazine_synth"/>
    <property type="match status" value="1"/>
</dbReference>
<dbReference type="InterPro" id="IPR034964">
    <property type="entry name" value="LS"/>
</dbReference>
<dbReference type="InterPro" id="IPR002180">
    <property type="entry name" value="LS/RS"/>
</dbReference>
<dbReference type="InterPro" id="IPR036467">
    <property type="entry name" value="LS/RS_sf"/>
</dbReference>
<dbReference type="NCBIfam" id="TIGR00114">
    <property type="entry name" value="lumazine-synth"/>
    <property type="match status" value="1"/>
</dbReference>
<dbReference type="PANTHER" id="PTHR21058:SF0">
    <property type="entry name" value="6,7-DIMETHYL-8-RIBITYLLUMAZINE SYNTHASE"/>
    <property type="match status" value="1"/>
</dbReference>
<dbReference type="PANTHER" id="PTHR21058">
    <property type="entry name" value="6,7-DIMETHYL-8-RIBITYLLUMAZINE SYNTHASE DMRL SYNTHASE LUMAZINE SYNTHASE"/>
    <property type="match status" value="1"/>
</dbReference>
<dbReference type="Pfam" id="PF00885">
    <property type="entry name" value="DMRL_synthase"/>
    <property type="match status" value="1"/>
</dbReference>
<dbReference type="SUPFAM" id="SSF52121">
    <property type="entry name" value="Lumazine synthase"/>
    <property type="match status" value="1"/>
</dbReference>
<gene>
    <name evidence="1" type="primary">ribH</name>
    <name type="ordered locus">MAV_3364</name>
</gene>
<evidence type="ECO:0000255" key="1">
    <source>
        <dbReference type="HAMAP-Rule" id="MF_00178"/>
    </source>
</evidence>
<organism>
    <name type="scientific">Mycobacterium avium (strain 104)</name>
    <dbReference type="NCBI Taxonomy" id="243243"/>
    <lineage>
        <taxon>Bacteria</taxon>
        <taxon>Bacillati</taxon>
        <taxon>Actinomycetota</taxon>
        <taxon>Actinomycetes</taxon>
        <taxon>Mycobacteriales</taxon>
        <taxon>Mycobacteriaceae</taxon>
        <taxon>Mycobacterium</taxon>
        <taxon>Mycobacterium avium complex (MAC)</taxon>
    </lineage>
</organism>